<dbReference type="EC" id="1.7.1.7" evidence="1"/>
<dbReference type="EMBL" id="AF153721">
    <property type="protein sequence ID" value="AAF64252.1"/>
    <property type="molecule type" value="mRNA"/>
</dbReference>
<dbReference type="SMR" id="Q9NJD8"/>
<dbReference type="STRING" id="6282.Q9NJD8"/>
<dbReference type="HOGENOM" id="CLU_022552_5_3_1"/>
<dbReference type="Proteomes" id="UP000024404">
    <property type="component" value="Unassembled WGS sequence"/>
</dbReference>
<dbReference type="GO" id="GO:1902560">
    <property type="term" value="C:GMP reductase complex"/>
    <property type="evidence" value="ECO:0007669"/>
    <property type="project" value="InterPro"/>
</dbReference>
<dbReference type="GO" id="GO:0003920">
    <property type="term" value="F:GMP reductase activity"/>
    <property type="evidence" value="ECO:0007669"/>
    <property type="project" value="UniProtKB-UniRule"/>
</dbReference>
<dbReference type="GO" id="GO:0046872">
    <property type="term" value="F:metal ion binding"/>
    <property type="evidence" value="ECO:0007669"/>
    <property type="project" value="UniProtKB-KW"/>
</dbReference>
<dbReference type="GO" id="GO:0006144">
    <property type="term" value="P:purine nucleobase metabolic process"/>
    <property type="evidence" value="ECO:0007669"/>
    <property type="project" value="UniProtKB-KW"/>
</dbReference>
<dbReference type="GO" id="GO:0006163">
    <property type="term" value="P:purine nucleotide metabolic process"/>
    <property type="evidence" value="ECO:0007669"/>
    <property type="project" value="UniProtKB-UniRule"/>
</dbReference>
<dbReference type="CDD" id="cd00381">
    <property type="entry name" value="IMPDH"/>
    <property type="match status" value="1"/>
</dbReference>
<dbReference type="FunFam" id="3.20.20.70:FF:000012">
    <property type="entry name" value="GMP reductase"/>
    <property type="match status" value="1"/>
</dbReference>
<dbReference type="Gene3D" id="3.20.20.70">
    <property type="entry name" value="Aldolase class I"/>
    <property type="match status" value="1"/>
</dbReference>
<dbReference type="HAMAP" id="MF_00596">
    <property type="entry name" value="GMP_reduct_type1"/>
    <property type="match status" value="1"/>
</dbReference>
<dbReference type="InterPro" id="IPR013785">
    <property type="entry name" value="Aldolase_TIM"/>
</dbReference>
<dbReference type="InterPro" id="IPR050139">
    <property type="entry name" value="GMP_reductase"/>
</dbReference>
<dbReference type="InterPro" id="IPR005993">
    <property type="entry name" value="GMPR"/>
</dbReference>
<dbReference type="InterPro" id="IPR015875">
    <property type="entry name" value="IMP_DH/GMP_Rdtase_CS"/>
</dbReference>
<dbReference type="InterPro" id="IPR001093">
    <property type="entry name" value="IMP_DH_GMPRt"/>
</dbReference>
<dbReference type="NCBIfam" id="TIGR01305">
    <property type="entry name" value="GMP_reduct_1"/>
    <property type="match status" value="1"/>
</dbReference>
<dbReference type="NCBIfam" id="NF003470">
    <property type="entry name" value="PRK05096.1"/>
    <property type="match status" value="1"/>
</dbReference>
<dbReference type="PANTHER" id="PTHR43170">
    <property type="entry name" value="GMP REDUCTASE"/>
    <property type="match status" value="1"/>
</dbReference>
<dbReference type="PANTHER" id="PTHR43170:SF5">
    <property type="entry name" value="GMP REDUCTASE"/>
    <property type="match status" value="1"/>
</dbReference>
<dbReference type="Pfam" id="PF00478">
    <property type="entry name" value="IMPDH"/>
    <property type="match status" value="1"/>
</dbReference>
<dbReference type="PIRSF" id="PIRSF000235">
    <property type="entry name" value="GMP_reductase"/>
    <property type="match status" value="1"/>
</dbReference>
<dbReference type="SMART" id="SM01240">
    <property type="entry name" value="IMPDH"/>
    <property type="match status" value="1"/>
</dbReference>
<dbReference type="SUPFAM" id="SSF51412">
    <property type="entry name" value="Inosine monophosphate dehydrogenase (IMPDH)"/>
    <property type="match status" value="1"/>
</dbReference>
<dbReference type="PROSITE" id="PS00487">
    <property type="entry name" value="IMP_DH_GMP_RED"/>
    <property type="match status" value="1"/>
</dbReference>
<comment type="function">
    <text evidence="1">Catalyzes the irreversible NADPH-dependent deamination of GMP to IMP. It functions in the conversion of nucleobase, nucleoside and nucleotide derivatives of G to A nucleotides, and in maintaining the intracellular balance of A and G nucleotides.</text>
</comment>
<comment type="catalytic activity">
    <reaction evidence="1">
        <text>IMP + NH4(+) + NADP(+) = GMP + NADPH + 2 H(+)</text>
        <dbReference type="Rhea" id="RHEA:17185"/>
        <dbReference type="ChEBI" id="CHEBI:15378"/>
        <dbReference type="ChEBI" id="CHEBI:28938"/>
        <dbReference type="ChEBI" id="CHEBI:57783"/>
        <dbReference type="ChEBI" id="CHEBI:58053"/>
        <dbReference type="ChEBI" id="CHEBI:58115"/>
        <dbReference type="ChEBI" id="CHEBI:58349"/>
        <dbReference type="EC" id="1.7.1.7"/>
    </reaction>
</comment>
<comment type="subunit">
    <text evidence="1">Homotetramer.</text>
</comment>
<comment type="similarity">
    <text evidence="1">Belongs to the IMPDH/GMPR family. GuaC type 1 subfamily.</text>
</comment>
<protein>
    <recommendedName>
        <fullName evidence="1">GMP reductase</fullName>
        <shortName evidence="1">GMPR</shortName>
        <ecNumber evidence="1">1.7.1.7</ecNumber>
    </recommendedName>
    <alternativeName>
        <fullName evidence="1">Guanosine 5'-monophosphate oxidoreductase</fullName>
        <shortName evidence="1">Guanosine monophosphate reductase</shortName>
    </alternativeName>
</protein>
<sequence length="364" mass="39874">MPTIENEPKLDFKDVLLRPKRSTLKSRADVDLVREFVFRNSKKKYVGIPIVASNMDTVGTFEVAESLSKKRLFTTIHKHYSVDQWMEFVNRISSNQDILSQIGISSGISDYDFTKLKKICGLIPELQYICLDVANGYSEVFVDFIRRVREEFPRHTIFAGNVVTGEMTEELILSGADVVKVGIGSGSVCTTRKKAGVGYPQLSAVLECADASHGLNGHVMSDGGCTNPGDVAKALGAGADFVMIGGLFAGHDQCGGDTVEKDGQKYKLFYGMSSDTAMEKHEGSVAEYRASEGKTITVPYRGDISKTVQDLLGGLRSACTYTGAKKLKELSKRATFVRVTQQTNEQYATFEISPSELQNLNIAV</sequence>
<evidence type="ECO:0000255" key="1">
    <source>
        <dbReference type="HAMAP-Rule" id="MF_03195"/>
    </source>
</evidence>
<organism>
    <name type="scientific">Onchocerca volvulus</name>
    <dbReference type="NCBI Taxonomy" id="6282"/>
    <lineage>
        <taxon>Eukaryota</taxon>
        <taxon>Metazoa</taxon>
        <taxon>Ecdysozoa</taxon>
        <taxon>Nematoda</taxon>
        <taxon>Chromadorea</taxon>
        <taxon>Rhabditida</taxon>
        <taxon>Spirurina</taxon>
        <taxon>Spiruromorpha</taxon>
        <taxon>Filarioidea</taxon>
        <taxon>Onchocercidae</taxon>
        <taxon>Onchocerca</taxon>
    </lineage>
</organism>
<name>GMPR_ONCVO</name>
<feature type="chain" id="PRO_0000093730" description="GMP reductase">
    <location>
        <begin position="1"/>
        <end position="364"/>
    </location>
</feature>
<feature type="active site" description="Thioimidate intermediate" evidence="1">
    <location>
        <position position="189"/>
    </location>
</feature>
<feature type="active site" description="Proton donor/acceptor" evidence="1">
    <location>
        <position position="191"/>
    </location>
</feature>
<feature type="binding site" evidence="1">
    <location>
        <begin position="26"/>
        <end position="27"/>
    </location>
    <ligand>
        <name>NADP(+)</name>
        <dbReference type="ChEBI" id="CHEBI:58349"/>
        <note>ligand shared between two neighboring subunits</note>
    </ligand>
</feature>
<feature type="binding site" description="in other chain" evidence="1">
    <location>
        <position position="78"/>
    </location>
    <ligand>
        <name>NADP(+)</name>
        <dbReference type="ChEBI" id="CHEBI:58349"/>
        <note>ligand shared between two neighboring subunits</note>
    </ligand>
</feature>
<feature type="binding site" description="in other chain" evidence="1">
    <location>
        <begin position="132"/>
        <end position="134"/>
    </location>
    <ligand>
        <name>NADP(+)</name>
        <dbReference type="ChEBI" id="CHEBI:58349"/>
        <note>ligand shared between two neighboring subunits</note>
    </ligand>
</feature>
<feature type="binding site" description="in other chain" evidence="1">
    <location>
        <begin position="183"/>
        <end position="184"/>
    </location>
    <ligand>
        <name>NADP(+)</name>
        <dbReference type="ChEBI" id="CHEBI:58349"/>
        <note>ligand shared between two neighboring subunits</note>
    </ligand>
</feature>
<feature type="binding site" evidence="1">
    <location>
        <position position="184"/>
    </location>
    <ligand>
        <name>K(+)</name>
        <dbReference type="ChEBI" id="CHEBI:29103"/>
    </ligand>
</feature>
<feature type="binding site" evidence="1">
    <location>
        <position position="186"/>
    </location>
    <ligand>
        <name>K(+)</name>
        <dbReference type="ChEBI" id="CHEBI:29103"/>
    </ligand>
</feature>
<feature type="binding site" evidence="1">
    <location>
        <position position="189"/>
    </location>
    <ligand>
        <name>K(+)</name>
        <dbReference type="ChEBI" id="CHEBI:29103"/>
    </ligand>
</feature>
<feature type="binding site" evidence="1">
    <location>
        <position position="192"/>
    </location>
    <ligand>
        <name>K(+)</name>
        <dbReference type="ChEBI" id="CHEBI:29103"/>
    </ligand>
</feature>
<feature type="binding site" evidence="1">
    <location>
        <begin position="222"/>
        <end position="224"/>
    </location>
    <ligand>
        <name>GMP</name>
        <dbReference type="ChEBI" id="CHEBI:58115"/>
    </ligand>
</feature>
<feature type="binding site" evidence="1">
    <location>
        <begin position="245"/>
        <end position="246"/>
    </location>
    <ligand>
        <name>GMP</name>
        <dbReference type="ChEBI" id="CHEBI:58115"/>
    </ligand>
</feature>
<feature type="binding site" evidence="1">
    <location>
        <begin position="271"/>
        <end position="273"/>
    </location>
    <ligand>
        <name>GMP</name>
        <dbReference type="ChEBI" id="CHEBI:58115"/>
    </ligand>
</feature>
<feature type="binding site" description="in other chain" evidence="1">
    <location>
        <position position="272"/>
    </location>
    <ligand>
        <name>NADP(+)</name>
        <dbReference type="ChEBI" id="CHEBI:58349"/>
        <note>ligand shared between two neighboring subunits</note>
    </ligand>
</feature>
<feature type="binding site" description="in other chain" evidence="1">
    <location>
        <begin position="288"/>
        <end position="289"/>
    </location>
    <ligand>
        <name>NADP(+)</name>
        <dbReference type="ChEBI" id="CHEBI:58349"/>
        <note>ligand shared between two neighboring subunits</note>
    </ligand>
</feature>
<feature type="binding site" evidence="1">
    <location>
        <begin position="289"/>
        <end position="293"/>
    </location>
    <ligand>
        <name>GMP</name>
        <dbReference type="ChEBI" id="CHEBI:58115"/>
    </ligand>
</feature>
<feature type="binding site" evidence="1">
    <location>
        <begin position="317"/>
        <end position="320"/>
    </location>
    <ligand>
        <name>NADP(+)</name>
        <dbReference type="ChEBI" id="CHEBI:58349"/>
        <note>ligand shared between two neighboring subunits</note>
    </ligand>
</feature>
<reference key="1">
    <citation type="journal article" date="2000" name="Infect. Immun.">
        <title>Identification of potential vaccine and drug target candidates by expressed sequence tag analysis and immunoscreening of Onchocerca volvulus larval cDNA libraries.</title>
        <authorList>
            <person name="Lizotte-Waniewski M."/>
            <person name="Tawe W."/>
            <person name="Guiliano D.B."/>
            <person name="Lu W."/>
            <person name="Liu J."/>
            <person name="Williams S.A."/>
            <person name="Lustigman S."/>
        </authorList>
    </citation>
    <scope>NUCLEOTIDE SEQUENCE [MRNA]</scope>
</reference>
<proteinExistence type="evidence at transcript level"/>
<accession>Q9NJD8</accession>
<keyword id="KW-0479">Metal-binding</keyword>
<keyword id="KW-0521">NADP</keyword>
<keyword id="KW-0560">Oxidoreductase</keyword>
<keyword id="KW-0630">Potassium</keyword>
<keyword id="KW-0659">Purine metabolism</keyword>
<keyword id="KW-1185">Reference proteome</keyword>
<gene>
    <name type="primary">gmr-1</name>
</gene>